<keyword id="KW-0004">4Fe-4S</keyword>
<keyword id="KW-0249">Electron transport</keyword>
<keyword id="KW-0408">Iron</keyword>
<keyword id="KW-0411">Iron-sulfur</keyword>
<keyword id="KW-0472">Membrane</keyword>
<keyword id="KW-0479">Metal-binding</keyword>
<keyword id="KW-0560">Oxidoreductase</keyword>
<keyword id="KW-0602">Photosynthesis</keyword>
<keyword id="KW-0603">Photosystem I</keyword>
<keyword id="KW-0677">Repeat</keyword>
<keyword id="KW-0793">Thylakoid</keyword>
<keyword id="KW-0813">Transport</keyword>
<feature type="chain" id="PRO_1000085953" description="Photosystem I iron-sulfur center">
    <location>
        <begin position="1"/>
        <end position="81"/>
    </location>
</feature>
<feature type="domain" description="4Fe-4S ferredoxin-type 1" evidence="1">
    <location>
        <begin position="1"/>
        <end position="31"/>
    </location>
</feature>
<feature type="domain" description="4Fe-4S ferredoxin-type 2" evidence="1">
    <location>
        <begin position="39"/>
        <end position="68"/>
    </location>
</feature>
<feature type="binding site" evidence="1">
    <location>
        <position position="11"/>
    </location>
    <ligand>
        <name>[4Fe-4S] cluster</name>
        <dbReference type="ChEBI" id="CHEBI:49883"/>
        <label>1</label>
    </ligand>
</feature>
<feature type="binding site" evidence="1">
    <location>
        <position position="14"/>
    </location>
    <ligand>
        <name>[4Fe-4S] cluster</name>
        <dbReference type="ChEBI" id="CHEBI:49883"/>
        <label>1</label>
    </ligand>
</feature>
<feature type="binding site" evidence="1">
    <location>
        <position position="17"/>
    </location>
    <ligand>
        <name>[4Fe-4S] cluster</name>
        <dbReference type="ChEBI" id="CHEBI:49883"/>
        <label>1</label>
    </ligand>
</feature>
<feature type="binding site" evidence="1">
    <location>
        <position position="21"/>
    </location>
    <ligand>
        <name>[4Fe-4S] cluster</name>
        <dbReference type="ChEBI" id="CHEBI:49883"/>
        <label>2</label>
    </ligand>
</feature>
<feature type="binding site" evidence="1">
    <location>
        <position position="48"/>
    </location>
    <ligand>
        <name>[4Fe-4S] cluster</name>
        <dbReference type="ChEBI" id="CHEBI:49883"/>
        <label>2</label>
    </ligand>
</feature>
<feature type="binding site" evidence="1">
    <location>
        <position position="51"/>
    </location>
    <ligand>
        <name>[4Fe-4S] cluster</name>
        <dbReference type="ChEBI" id="CHEBI:49883"/>
        <label>2</label>
    </ligand>
</feature>
<feature type="binding site" evidence="1">
    <location>
        <position position="54"/>
    </location>
    <ligand>
        <name>[4Fe-4S] cluster</name>
        <dbReference type="ChEBI" id="CHEBI:49883"/>
        <label>2</label>
    </ligand>
</feature>
<feature type="binding site" evidence="1">
    <location>
        <position position="58"/>
    </location>
    <ligand>
        <name>[4Fe-4S] cluster</name>
        <dbReference type="ChEBI" id="CHEBI:49883"/>
        <label>1</label>
    </ligand>
</feature>
<comment type="function">
    <text evidence="1">Apoprotein for the two 4Fe-4S centers FA and FB of photosystem I (PSI); essential for photochemical activity. FB is the terminal electron acceptor of PSI, donating electrons to ferredoxin. The C-terminus interacts with PsaA/B/D and helps assemble the protein into the PSI complex. Required for binding of PsaD and PsaE to PSI. PSI is a plastocyanin/cytochrome c6-ferredoxin oxidoreductase, converting photonic excitation into a charge separation, which transfers an electron from the donor P700 chlorophyll pair to the spectroscopically characterized acceptors A0, A1, FX, FA and FB in turn.</text>
</comment>
<comment type="catalytic activity">
    <reaction evidence="1">
        <text>reduced [plastocyanin] + hnu + oxidized [2Fe-2S]-[ferredoxin] = oxidized [plastocyanin] + reduced [2Fe-2S]-[ferredoxin]</text>
        <dbReference type="Rhea" id="RHEA:30407"/>
        <dbReference type="Rhea" id="RHEA-COMP:10000"/>
        <dbReference type="Rhea" id="RHEA-COMP:10001"/>
        <dbReference type="Rhea" id="RHEA-COMP:10039"/>
        <dbReference type="Rhea" id="RHEA-COMP:10040"/>
        <dbReference type="ChEBI" id="CHEBI:29036"/>
        <dbReference type="ChEBI" id="CHEBI:30212"/>
        <dbReference type="ChEBI" id="CHEBI:33737"/>
        <dbReference type="ChEBI" id="CHEBI:33738"/>
        <dbReference type="ChEBI" id="CHEBI:49552"/>
        <dbReference type="EC" id="1.97.1.12"/>
    </reaction>
</comment>
<comment type="cofactor">
    <cofactor evidence="1">
        <name>[4Fe-4S] cluster</name>
        <dbReference type="ChEBI" id="CHEBI:49883"/>
    </cofactor>
    <text evidence="1">Binds 2 [4Fe-4S] clusters. Cluster 2 is most probably the spectroscopically characterized electron acceptor FA and cluster 1 is most probably FB.</text>
</comment>
<comment type="subunit">
    <text evidence="1">The cyanobacterial PSI reaction center is composed of one copy each of PsaA,B,C,D,E,F,I,J,K,L,M and X, and forms trimeric complexes.</text>
</comment>
<comment type="subcellular location">
    <subcellularLocation>
        <location evidence="1">Cellular thylakoid membrane</location>
        <topology evidence="1">Peripheral membrane protein</topology>
        <orientation evidence="1">Cytoplasmic side</orientation>
    </subcellularLocation>
</comment>
<reference key="1">
    <citation type="journal article" date="2007" name="DNA Res.">
        <title>Complete genomic structure of the bloom-forming toxic cyanobacterium Microcystis aeruginosa NIES-843.</title>
        <authorList>
            <person name="Kaneko T."/>
            <person name="Nakajima N."/>
            <person name="Okamoto S."/>
            <person name="Suzuki I."/>
            <person name="Tanabe Y."/>
            <person name="Tamaoki M."/>
            <person name="Nakamura Y."/>
            <person name="Kasai F."/>
            <person name="Watanabe A."/>
            <person name="Kawashima K."/>
            <person name="Kishida Y."/>
            <person name="Ono A."/>
            <person name="Shimizu Y."/>
            <person name="Takahashi C."/>
            <person name="Minami C."/>
            <person name="Fujishiro T."/>
            <person name="Kohara M."/>
            <person name="Katoh M."/>
            <person name="Nakazaki N."/>
            <person name="Nakayama S."/>
            <person name="Yamada M."/>
            <person name="Tabata S."/>
            <person name="Watanabe M.M."/>
        </authorList>
    </citation>
    <scope>NUCLEOTIDE SEQUENCE [LARGE SCALE GENOMIC DNA]</scope>
    <source>
        <strain>NIES-843 / IAM M-247</strain>
    </source>
</reference>
<gene>
    <name evidence="1" type="primary">psaC</name>
    <name type="ordered locus">MAE_59230</name>
</gene>
<dbReference type="EC" id="1.97.1.12" evidence="1"/>
<dbReference type="EMBL" id="AP009552">
    <property type="protein sequence ID" value="BAG05745.1"/>
    <property type="molecule type" value="Genomic_DNA"/>
</dbReference>
<dbReference type="RefSeq" id="WP_002734319.1">
    <property type="nucleotide sequence ID" value="NC_010296.1"/>
</dbReference>
<dbReference type="SMR" id="B0JJ37"/>
<dbReference type="STRING" id="449447.MAE_59230"/>
<dbReference type="PaxDb" id="449447-MAE_59230"/>
<dbReference type="EnsemblBacteria" id="BAG05745">
    <property type="protein sequence ID" value="BAG05745"/>
    <property type="gene ID" value="MAE_59230"/>
</dbReference>
<dbReference type="GeneID" id="66705134"/>
<dbReference type="KEGG" id="mar:MAE_59230"/>
<dbReference type="eggNOG" id="COG1143">
    <property type="taxonomic scope" value="Bacteria"/>
</dbReference>
<dbReference type="HOGENOM" id="CLU_139698_8_0_3"/>
<dbReference type="BioCyc" id="MAER449447:MAE_RS25860-MONOMER"/>
<dbReference type="Proteomes" id="UP000001510">
    <property type="component" value="Chromosome"/>
</dbReference>
<dbReference type="GO" id="GO:0009522">
    <property type="term" value="C:photosystem I"/>
    <property type="evidence" value="ECO:0007669"/>
    <property type="project" value="UniProtKB-KW"/>
</dbReference>
<dbReference type="GO" id="GO:0031676">
    <property type="term" value="C:plasma membrane-derived thylakoid membrane"/>
    <property type="evidence" value="ECO:0007669"/>
    <property type="project" value="UniProtKB-SubCell"/>
</dbReference>
<dbReference type="GO" id="GO:0051539">
    <property type="term" value="F:4 iron, 4 sulfur cluster binding"/>
    <property type="evidence" value="ECO:0007669"/>
    <property type="project" value="UniProtKB-KW"/>
</dbReference>
<dbReference type="GO" id="GO:0009055">
    <property type="term" value="F:electron transfer activity"/>
    <property type="evidence" value="ECO:0007669"/>
    <property type="project" value="UniProtKB-UniRule"/>
</dbReference>
<dbReference type="GO" id="GO:0046872">
    <property type="term" value="F:metal ion binding"/>
    <property type="evidence" value="ECO:0007669"/>
    <property type="project" value="UniProtKB-KW"/>
</dbReference>
<dbReference type="GO" id="GO:0016491">
    <property type="term" value="F:oxidoreductase activity"/>
    <property type="evidence" value="ECO:0007669"/>
    <property type="project" value="UniProtKB-KW"/>
</dbReference>
<dbReference type="GO" id="GO:0009773">
    <property type="term" value="P:photosynthetic electron transport in photosystem I"/>
    <property type="evidence" value="ECO:0007669"/>
    <property type="project" value="InterPro"/>
</dbReference>
<dbReference type="FunFam" id="3.30.70.20:FF:000001">
    <property type="entry name" value="Photosystem I iron-sulfur center"/>
    <property type="match status" value="1"/>
</dbReference>
<dbReference type="Gene3D" id="3.30.70.20">
    <property type="match status" value="1"/>
</dbReference>
<dbReference type="HAMAP" id="MF_01303">
    <property type="entry name" value="PSI_PsaC"/>
    <property type="match status" value="1"/>
</dbReference>
<dbReference type="InterPro" id="IPR017896">
    <property type="entry name" value="4Fe4S_Fe-S-bd"/>
</dbReference>
<dbReference type="InterPro" id="IPR017900">
    <property type="entry name" value="4Fe4S_Fe_S_CS"/>
</dbReference>
<dbReference type="InterPro" id="IPR050157">
    <property type="entry name" value="PSI_iron-sulfur_center"/>
</dbReference>
<dbReference type="InterPro" id="IPR017491">
    <property type="entry name" value="PSI_PsaC"/>
</dbReference>
<dbReference type="NCBIfam" id="TIGR03048">
    <property type="entry name" value="PS_I_psaC"/>
    <property type="match status" value="1"/>
</dbReference>
<dbReference type="PANTHER" id="PTHR24960:SF79">
    <property type="entry name" value="PHOTOSYSTEM I IRON-SULFUR CENTER"/>
    <property type="match status" value="1"/>
</dbReference>
<dbReference type="PANTHER" id="PTHR24960">
    <property type="entry name" value="PHOTOSYSTEM I IRON-SULFUR CENTER-RELATED"/>
    <property type="match status" value="1"/>
</dbReference>
<dbReference type="Pfam" id="PF12838">
    <property type="entry name" value="Fer4_7"/>
    <property type="match status" value="1"/>
</dbReference>
<dbReference type="SUPFAM" id="SSF54862">
    <property type="entry name" value="4Fe-4S ferredoxins"/>
    <property type="match status" value="1"/>
</dbReference>
<dbReference type="PROSITE" id="PS00198">
    <property type="entry name" value="4FE4S_FER_1"/>
    <property type="match status" value="2"/>
</dbReference>
<dbReference type="PROSITE" id="PS51379">
    <property type="entry name" value="4FE4S_FER_2"/>
    <property type="match status" value="2"/>
</dbReference>
<proteinExistence type="inferred from homology"/>
<accession>B0JJ37</accession>
<evidence type="ECO:0000255" key="1">
    <source>
        <dbReference type="HAMAP-Rule" id="MF_01303"/>
    </source>
</evidence>
<name>PSAC_MICAN</name>
<protein>
    <recommendedName>
        <fullName evidence="1">Photosystem I iron-sulfur center</fullName>
        <ecNumber evidence="1">1.97.1.12</ecNumber>
    </recommendedName>
    <alternativeName>
        <fullName evidence="1">9 kDa polypeptide</fullName>
    </alternativeName>
    <alternativeName>
        <fullName evidence="1">PSI-C</fullName>
    </alternativeName>
    <alternativeName>
        <fullName evidence="1">Photosystem I subunit VII</fullName>
    </alternativeName>
    <alternativeName>
        <fullName evidence="1">PsaC</fullName>
    </alternativeName>
</protein>
<sequence>MSHSVKIYDTCIGCTQCVRACPLDVLEMVPWDGCKAAQIASSPRTEDCIGCKRCETACPTDFLSIRVYLGAETTRSMGLAY</sequence>
<organism>
    <name type="scientific">Microcystis aeruginosa (strain NIES-843 / IAM M-2473)</name>
    <dbReference type="NCBI Taxonomy" id="449447"/>
    <lineage>
        <taxon>Bacteria</taxon>
        <taxon>Bacillati</taxon>
        <taxon>Cyanobacteriota</taxon>
        <taxon>Cyanophyceae</taxon>
        <taxon>Oscillatoriophycideae</taxon>
        <taxon>Chroococcales</taxon>
        <taxon>Microcystaceae</taxon>
        <taxon>Microcystis</taxon>
    </lineage>
</organism>